<sequence>MFANISISEFDPELAQAIASEDERQEAHIELIASENYCSPAVMEAQGSKLTNKYAEGYPGKRYYGGCEFVDVIEQMAIDRAKELFGADYANVQPHAGSQANSAVYLALLNPGDTVLGMSLAHGGHLTHGAKVSFSGKTYNAVQYGLNAETGEIDYEEVERLALEHKPRMIVAGFSAYSRVVDWQRFRDIADKVGAYLFVDMAHVAGLVAAGVYPNPVQIADVTTTTTHKTLRGPRSGLILAKANEEIEKKLQSAVFPGNQGGPLMHAIAAKAICFKEAMSDDFKAYQQQVVKNAQAMAEVFIARGYDVVSGGTDNHLFLLSLIKQDVTGKDADAWLGAAHITVNKNSVPNDPRSPFVTSGIRIGTPAVTTRGFGEAEVRELAGWIADVIDSKGDEKVIADVKAKVEAVCAKFPVYAK</sequence>
<protein>
    <recommendedName>
        <fullName evidence="1">Serine hydroxymethyltransferase</fullName>
        <shortName evidence="1">SHMT</shortName>
        <shortName evidence="1">Serine methylase</shortName>
        <ecNumber evidence="1">2.1.2.1</ecNumber>
    </recommendedName>
</protein>
<dbReference type="EC" id="2.1.2.1" evidence="1"/>
<dbReference type="EMBL" id="CP000863">
    <property type="protein sequence ID" value="ACC57819.1"/>
    <property type="molecule type" value="Genomic_DNA"/>
</dbReference>
<dbReference type="RefSeq" id="WP_000457893.1">
    <property type="nucleotide sequence ID" value="NZ_CP031380.1"/>
</dbReference>
<dbReference type="SMR" id="B2HUY9"/>
<dbReference type="GeneID" id="92894564"/>
<dbReference type="KEGG" id="abc:ACICU_02507"/>
<dbReference type="HOGENOM" id="CLU_022477_2_1_6"/>
<dbReference type="UniPathway" id="UPA00193"/>
<dbReference type="UniPathway" id="UPA00288">
    <property type="reaction ID" value="UER01023"/>
</dbReference>
<dbReference type="Proteomes" id="UP000008839">
    <property type="component" value="Chromosome"/>
</dbReference>
<dbReference type="GO" id="GO:0005829">
    <property type="term" value="C:cytosol"/>
    <property type="evidence" value="ECO:0007669"/>
    <property type="project" value="TreeGrafter"/>
</dbReference>
<dbReference type="GO" id="GO:0004372">
    <property type="term" value="F:glycine hydroxymethyltransferase activity"/>
    <property type="evidence" value="ECO:0007669"/>
    <property type="project" value="UniProtKB-UniRule"/>
</dbReference>
<dbReference type="GO" id="GO:0030170">
    <property type="term" value="F:pyridoxal phosphate binding"/>
    <property type="evidence" value="ECO:0007669"/>
    <property type="project" value="UniProtKB-UniRule"/>
</dbReference>
<dbReference type="GO" id="GO:0019264">
    <property type="term" value="P:glycine biosynthetic process from serine"/>
    <property type="evidence" value="ECO:0007669"/>
    <property type="project" value="UniProtKB-UniRule"/>
</dbReference>
<dbReference type="GO" id="GO:0035999">
    <property type="term" value="P:tetrahydrofolate interconversion"/>
    <property type="evidence" value="ECO:0007669"/>
    <property type="project" value="UniProtKB-UniRule"/>
</dbReference>
<dbReference type="CDD" id="cd00378">
    <property type="entry name" value="SHMT"/>
    <property type="match status" value="1"/>
</dbReference>
<dbReference type="FunFam" id="3.40.640.10:FF:000001">
    <property type="entry name" value="Serine hydroxymethyltransferase"/>
    <property type="match status" value="1"/>
</dbReference>
<dbReference type="FunFam" id="3.90.1150.10:FF:000003">
    <property type="entry name" value="Serine hydroxymethyltransferase"/>
    <property type="match status" value="1"/>
</dbReference>
<dbReference type="Gene3D" id="3.90.1150.10">
    <property type="entry name" value="Aspartate Aminotransferase, domain 1"/>
    <property type="match status" value="1"/>
</dbReference>
<dbReference type="Gene3D" id="3.40.640.10">
    <property type="entry name" value="Type I PLP-dependent aspartate aminotransferase-like (Major domain)"/>
    <property type="match status" value="1"/>
</dbReference>
<dbReference type="HAMAP" id="MF_00051">
    <property type="entry name" value="SHMT"/>
    <property type="match status" value="1"/>
</dbReference>
<dbReference type="InterPro" id="IPR015424">
    <property type="entry name" value="PyrdxlP-dep_Trfase"/>
</dbReference>
<dbReference type="InterPro" id="IPR015421">
    <property type="entry name" value="PyrdxlP-dep_Trfase_major"/>
</dbReference>
<dbReference type="InterPro" id="IPR015422">
    <property type="entry name" value="PyrdxlP-dep_Trfase_small"/>
</dbReference>
<dbReference type="InterPro" id="IPR001085">
    <property type="entry name" value="Ser_HO-MeTrfase"/>
</dbReference>
<dbReference type="InterPro" id="IPR049943">
    <property type="entry name" value="Ser_HO-MeTrfase-like"/>
</dbReference>
<dbReference type="InterPro" id="IPR019798">
    <property type="entry name" value="Ser_HO-MeTrfase_PLP_BS"/>
</dbReference>
<dbReference type="InterPro" id="IPR039429">
    <property type="entry name" value="SHMT-like_dom"/>
</dbReference>
<dbReference type="NCBIfam" id="NF000586">
    <property type="entry name" value="PRK00011.1"/>
    <property type="match status" value="1"/>
</dbReference>
<dbReference type="PANTHER" id="PTHR11680">
    <property type="entry name" value="SERINE HYDROXYMETHYLTRANSFERASE"/>
    <property type="match status" value="1"/>
</dbReference>
<dbReference type="PANTHER" id="PTHR11680:SF50">
    <property type="entry name" value="SERINE HYDROXYMETHYLTRANSFERASE"/>
    <property type="match status" value="1"/>
</dbReference>
<dbReference type="Pfam" id="PF00464">
    <property type="entry name" value="SHMT"/>
    <property type="match status" value="1"/>
</dbReference>
<dbReference type="PIRSF" id="PIRSF000412">
    <property type="entry name" value="SHMT"/>
    <property type="match status" value="1"/>
</dbReference>
<dbReference type="SUPFAM" id="SSF53383">
    <property type="entry name" value="PLP-dependent transferases"/>
    <property type="match status" value="1"/>
</dbReference>
<dbReference type="PROSITE" id="PS00096">
    <property type="entry name" value="SHMT"/>
    <property type="match status" value="1"/>
</dbReference>
<organism>
    <name type="scientific">Acinetobacter baumannii (strain ACICU)</name>
    <dbReference type="NCBI Taxonomy" id="405416"/>
    <lineage>
        <taxon>Bacteria</taxon>
        <taxon>Pseudomonadati</taxon>
        <taxon>Pseudomonadota</taxon>
        <taxon>Gammaproteobacteria</taxon>
        <taxon>Moraxellales</taxon>
        <taxon>Moraxellaceae</taxon>
        <taxon>Acinetobacter</taxon>
        <taxon>Acinetobacter calcoaceticus/baumannii complex</taxon>
    </lineage>
</organism>
<feature type="chain" id="PRO_1000091506" description="Serine hydroxymethyltransferase">
    <location>
        <begin position="1"/>
        <end position="417"/>
    </location>
</feature>
<feature type="binding site" evidence="1">
    <location>
        <position position="120"/>
    </location>
    <ligand>
        <name>(6S)-5,6,7,8-tetrahydrofolate</name>
        <dbReference type="ChEBI" id="CHEBI:57453"/>
    </ligand>
</feature>
<feature type="binding site" evidence="1">
    <location>
        <begin position="124"/>
        <end position="126"/>
    </location>
    <ligand>
        <name>(6S)-5,6,7,8-tetrahydrofolate</name>
        <dbReference type="ChEBI" id="CHEBI:57453"/>
    </ligand>
</feature>
<feature type="binding site" evidence="1">
    <location>
        <begin position="354"/>
        <end position="356"/>
    </location>
    <ligand>
        <name>(6S)-5,6,7,8-tetrahydrofolate</name>
        <dbReference type="ChEBI" id="CHEBI:57453"/>
    </ligand>
</feature>
<feature type="site" description="Plays an important role in substrate specificity" evidence="1">
    <location>
        <position position="228"/>
    </location>
</feature>
<feature type="modified residue" description="N6-(pyridoxal phosphate)lysine" evidence="1">
    <location>
        <position position="229"/>
    </location>
</feature>
<proteinExistence type="inferred from homology"/>
<comment type="function">
    <text evidence="1">Catalyzes the reversible interconversion of serine and glycine with tetrahydrofolate (THF) serving as the one-carbon carrier. This reaction serves as the major source of one-carbon groups required for the biosynthesis of purines, thymidylate, methionine, and other important biomolecules. Also exhibits THF-independent aldolase activity toward beta-hydroxyamino acids, producing glycine and aldehydes, via a retro-aldol mechanism.</text>
</comment>
<comment type="catalytic activity">
    <reaction evidence="1">
        <text>(6R)-5,10-methylene-5,6,7,8-tetrahydrofolate + glycine + H2O = (6S)-5,6,7,8-tetrahydrofolate + L-serine</text>
        <dbReference type="Rhea" id="RHEA:15481"/>
        <dbReference type="ChEBI" id="CHEBI:15377"/>
        <dbReference type="ChEBI" id="CHEBI:15636"/>
        <dbReference type="ChEBI" id="CHEBI:33384"/>
        <dbReference type="ChEBI" id="CHEBI:57305"/>
        <dbReference type="ChEBI" id="CHEBI:57453"/>
        <dbReference type="EC" id="2.1.2.1"/>
    </reaction>
</comment>
<comment type="cofactor">
    <cofactor evidence="1">
        <name>pyridoxal 5'-phosphate</name>
        <dbReference type="ChEBI" id="CHEBI:597326"/>
    </cofactor>
</comment>
<comment type="pathway">
    <text evidence="1">One-carbon metabolism; tetrahydrofolate interconversion.</text>
</comment>
<comment type="pathway">
    <text evidence="1">Amino-acid biosynthesis; glycine biosynthesis; glycine from L-serine: step 1/1.</text>
</comment>
<comment type="subunit">
    <text evidence="1">Homodimer.</text>
</comment>
<comment type="subcellular location">
    <subcellularLocation>
        <location evidence="1">Cytoplasm</location>
    </subcellularLocation>
</comment>
<comment type="similarity">
    <text evidence="1">Belongs to the SHMT family.</text>
</comment>
<reference key="1">
    <citation type="journal article" date="2008" name="Antimicrob. Agents Chemother.">
        <title>Whole-genome pyrosequencing of an epidemic multidrug-resistant Acinetobacter baumannii strain belonging to the European clone II group.</title>
        <authorList>
            <person name="Iacono M."/>
            <person name="Villa L."/>
            <person name="Fortini D."/>
            <person name="Bordoni R."/>
            <person name="Imperi F."/>
            <person name="Bonnal R.J."/>
            <person name="Sicheritz-Ponten T."/>
            <person name="De Bellis G."/>
            <person name="Visca P."/>
            <person name="Cassone A."/>
            <person name="Carattoli A."/>
        </authorList>
    </citation>
    <scope>NUCLEOTIDE SEQUENCE [LARGE SCALE GENOMIC DNA]</scope>
    <source>
        <strain>ACICU</strain>
    </source>
</reference>
<accession>B2HUY9</accession>
<gene>
    <name evidence="1" type="primary">glyA</name>
    <name type="ordered locus">ACICU_02507</name>
</gene>
<evidence type="ECO:0000255" key="1">
    <source>
        <dbReference type="HAMAP-Rule" id="MF_00051"/>
    </source>
</evidence>
<keyword id="KW-0028">Amino-acid biosynthesis</keyword>
<keyword id="KW-0963">Cytoplasm</keyword>
<keyword id="KW-0554">One-carbon metabolism</keyword>
<keyword id="KW-0663">Pyridoxal phosphate</keyword>
<keyword id="KW-0808">Transferase</keyword>
<name>GLYA_ACIBC</name>